<proteinExistence type="inferred from homology"/>
<reference key="1">
    <citation type="submission" date="2004-11" db="EMBL/GenBank/DDBJ databases">
        <title>Complete genome sequence of Thermus thermophilus HB8.</title>
        <authorList>
            <person name="Masui R."/>
            <person name="Kurokawa K."/>
            <person name="Nakagawa N."/>
            <person name="Tokunaga F."/>
            <person name="Koyama Y."/>
            <person name="Shibata T."/>
            <person name="Oshima T."/>
            <person name="Yokoyama S."/>
            <person name="Yasunaga T."/>
            <person name="Kuramitsu S."/>
        </authorList>
    </citation>
    <scope>NUCLEOTIDE SEQUENCE [LARGE SCALE GENOMIC DNA]</scope>
    <source>
        <strain>ATCC 27634 / DSM 579 / HB8</strain>
    </source>
</reference>
<gene>
    <name evidence="1" type="primary">dnaJ1</name>
    <name type="ordered locus">TTHA0174</name>
</gene>
<organism>
    <name type="scientific">Thermus thermophilus (strain ATCC 27634 / DSM 579 / HB8)</name>
    <dbReference type="NCBI Taxonomy" id="300852"/>
    <lineage>
        <taxon>Bacteria</taxon>
        <taxon>Thermotogati</taxon>
        <taxon>Deinococcota</taxon>
        <taxon>Deinococci</taxon>
        <taxon>Thermales</taxon>
        <taxon>Thermaceae</taxon>
        <taxon>Thermus</taxon>
    </lineage>
</organism>
<protein>
    <recommendedName>
        <fullName evidence="1">Chaperone protein DnaJ 1</fullName>
    </recommendedName>
</protein>
<accession>Q5SLW9</accession>
<dbReference type="EMBL" id="AP008226">
    <property type="protein sequence ID" value="BAD69997.1"/>
    <property type="molecule type" value="Genomic_DNA"/>
</dbReference>
<dbReference type="RefSeq" id="WP_011227756.1">
    <property type="nucleotide sequence ID" value="NC_006461.1"/>
</dbReference>
<dbReference type="RefSeq" id="YP_143440.1">
    <property type="nucleotide sequence ID" value="NC_006461.1"/>
</dbReference>
<dbReference type="SMR" id="Q5SLW9"/>
<dbReference type="EnsemblBacteria" id="BAD69997">
    <property type="protein sequence ID" value="BAD69997"/>
    <property type="gene ID" value="BAD69997"/>
</dbReference>
<dbReference type="GeneID" id="3169649"/>
<dbReference type="KEGG" id="ttj:TTHA0174"/>
<dbReference type="PATRIC" id="fig|300852.9.peg.172"/>
<dbReference type="eggNOG" id="COG0484">
    <property type="taxonomic scope" value="Bacteria"/>
</dbReference>
<dbReference type="HOGENOM" id="CLU_017633_0_7_0"/>
<dbReference type="PhylomeDB" id="Q5SLW9"/>
<dbReference type="Proteomes" id="UP000000532">
    <property type="component" value="Chromosome"/>
</dbReference>
<dbReference type="GO" id="GO:0005737">
    <property type="term" value="C:cytoplasm"/>
    <property type="evidence" value="ECO:0007669"/>
    <property type="project" value="UniProtKB-SubCell"/>
</dbReference>
<dbReference type="GO" id="GO:0005524">
    <property type="term" value="F:ATP binding"/>
    <property type="evidence" value="ECO:0007669"/>
    <property type="project" value="InterPro"/>
</dbReference>
<dbReference type="GO" id="GO:0031072">
    <property type="term" value="F:heat shock protein binding"/>
    <property type="evidence" value="ECO:0007669"/>
    <property type="project" value="InterPro"/>
</dbReference>
<dbReference type="GO" id="GO:0051082">
    <property type="term" value="F:unfolded protein binding"/>
    <property type="evidence" value="ECO:0007669"/>
    <property type="project" value="UniProtKB-UniRule"/>
</dbReference>
<dbReference type="GO" id="GO:0008270">
    <property type="term" value="F:zinc ion binding"/>
    <property type="evidence" value="ECO:0007669"/>
    <property type="project" value="UniProtKB-UniRule"/>
</dbReference>
<dbReference type="GO" id="GO:0051085">
    <property type="term" value="P:chaperone cofactor-dependent protein refolding"/>
    <property type="evidence" value="ECO:0007669"/>
    <property type="project" value="TreeGrafter"/>
</dbReference>
<dbReference type="GO" id="GO:0006260">
    <property type="term" value="P:DNA replication"/>
    <property type="evidence" value="ECO:0007669"/>
    <property type="project" value="UniProtKB-KW"/>
</dbReference>
<dbReference type="GO" id="GO:0042026">
    <property type="term" value="P:protein refolding"/>
    <property type="evidence" value="ECO:0007669"/>
    <property type="project" value="TreeGrafter"/>
</dbReference>
<dbReference type="GO" id="GO:0009408">
    <property type="term" value="P:response to heat"/>
    <property type="evidence" value="ECO:0007669"/>
    <property type="project" value="InterPro"/>
</dbReference>
<dbReference type="CDD" id="cd06257">
    <property type="entry name" value="DnaJ"/>
    <property type="match status" value="1"/>
</dbReference>
<dbReference type="CDD" id="cd10747">
    <property type="entry name" value="DnaJ_C"/>
    <property type="match status" value="1"/>
</dbReference>
<dbReference type="CDD" id="cd10719">
    <property type="entry name" value="DnaJ_zf"/>
    <property type="match status" value="1"/>
</dbReference>
<dbReference type="FunFam" id="2.10.230.10:FF:000002">
    <property type="entry name" value="Molecular chaperone DnaJ"/>
    <property type="match status" value="1"/>
</dbReference>
<dbReference type="Gene3D" id="1.10.287.110">
    <property type="entry name" value="DnaJ domain"/>
    <property type="match status" value="1"/>
</dbReference>
<dbReference type="Gene3D" id="2.10.230.10">
    <property type="entry name" value="Heat shock protein DnaJ, cysteine-rich domain"/>
    <property type="match status" value="1"/>
</dbReference>
<dbReference type="Gene3D" id="2.60.260.20">
    <property type="entry name" value="Urease metallochaperone UreE, N-terminal domain"/>
    <property type="match status" value="2"/>
</dbReference>
<dbReference type="HAMAP" id="MF_01152">
    <property type="entry name" value="DnaJ"/>
    <property type="match status" value="1"/>
</dbReference>
<dbReference type="InterPro" id="IPR012724">
    <property type="entry name" value="DnaJ"/>
</dbReference>
<dbReference type="InterPro" id="IPR002939">
    <property type="entry name" value="DnaJ_C"/>
</dbReference>
<dbReference type="InterPro" id="IPR001623">
    <property type="entry name" value="DnaJ_domain"/>
</dbReference>
<dbReference type="InterPro" id="IPR018253">
    <property type="entry name" value="DnaJ_domain_CS"/>
</dbReference>
<dbReference type="InterPro" id="IPR008971">
    <property type="entry name" value="HSP40/DnaJ_pept-bd"/>
</dbReference>
<dbReference type="InterPro" id="IPR001305">
    <property type="entry name" value="HSP_DnaJ_Cys-rich_dom"/>
</dbReference>
<dbReference type="InterPro" id="IPR036410">
    <property type="entry name" value="HSP_DnaJ_Cys-rich_dom_sf"/>
</dbReference>
<dbReference type="InterPro" id="IPR036869">
    <property type="entry name" value="J_dom_sf"/>
</dbReference>
<dbReference type="PANTHER" id="PTHR43096:SF48">
    <property type="entry name" value="CHAPERONE PROTEIN DNAJ"/>
    <property type="match status" value="1"/>
</dbReference>
<dbReference type="PANTHER" id="PTHR43096">
    <property type="entry name" value="DNAJ HOMOLOG 1, MITOCHONDRIAL-RELATED"/>
    <property type="match status" value="1"/>
</dbReference>
<dbReference type="Pfam" id="PF00226">
    <property type="entry name" value="DnaJ"/>
    <property type="match status" value="1"/>
</dbReference>
<dbReference type="Pfam" id="PF01556">
    <property type="entry name" value="DnaJ_C"/>
    <property type="match status" value="1"/>
</dbReference>
<dbReference type="Pfam" id="PF00684">
    <property type="entry name" value="DnaJ_CXXCXGXG"/>
    <property type="match status" value="1"/>
</dbReference>
<dbReference type="PRINTS" id="PR00625">
    <property type="entry name" value="JDOMAIN"/>
</dbReference>
<dbReference type="SMART" id="SM00271">
    <property type="entry name" value="DnaJ"/>
    <property type="match status" value="1"/>
</dbReference>
<dbReference type="SUPFAM" id="SSF46565">
    <property type="entry name" value="Chaperone J-domain"/>
    <property type="match status" value="1"/>
</dbReference>
<dbReference type="SUPFAM" id="SSF57938">
    <property type="entry name" value="DnaJ/Hsp40 cysteine-rich domain"/>
    <property type="match status" value="1"/>
</dbReference>
<dbReference type="SUPFAM" id="SSF49493">
    <property type="entry name" value="HSP40/DnaJ peptide-binding domain"/>
    <property type="match status" value="2"/>
</dbReference>
<dbReference type="PROSITE" id="PS00636">
    <property type="entry name" value="DNAJ_1"/>
    <property type="match status" value="1"/>
</dbReference>
<dbReference type="PROSITE" id="PS50076">
    <property type="entry name" value="DNAJ_2"/>
    <property type="match status" value="1"/>
</dbReference>
<dbReference type="PROSITE" id="PS51188">
    <property type="entry name" value="ZF_CR"/>
    <property type="match status" value="1"/>
</dbReference>
<comment type="function">
    <text evidence="1">Participates actively in the response to hyperosmotic and heat shock by preventing the aggregation of stress-denatured proteins and by disaggregating proteins, also in an autonomous, DnaK-independent fashion. Unfolded proteins bind initially to DnaJ; upon interaction with the DnaJ-bound protein, DnaK hydrolyzes its bound ATP, resulting in the formation of a stable complex. GrpE releases ADP from DnaK; ATP binding to DnaK triggers the release of the substrate protein, thus completing the reaction cycle. Several rounds of ATP-dependent interactions between DnaJ, DnaK and GrpE are required for fully efficient folding. Also involved, together with DnaK and GrpE, in the DNA replication of plasmids through activation of initiation proteins.</text>
</comment>
<comment type="cofactor">
    <cofactor evidence="1">
        <name>Zn(2+)</name>
        <dbReference type="ChEBI" id="CHEBI:29105"/>
    </cofactor>
    <text evidence="1">Binds 2 Zn(2+) ions per monomer.</text>
</comment>
<comment type="subunit">
    <text evidence="1">Homodimer.</text>
</comment>
<comment type="subcellular location">
    <subcellularLocation>
        <location evidence="1">Cytoplasm</location>
    </subcellularLocation>
</comment>
<comment type="domain">
    <text evidence="1">The J domain is necessary and sufficient to stimulate DnaK ATPase activity. Zinc center 1 plays an important role in the autonomous, DnaK-independent chaperone activity of DnaJ. Zinc center 2 is essential for interaction with DnaK and for DnaJ activity.</text>
</comment>
<comment type="similarity">
    <text evidence="1">Belongs to the DnaJ family.</text>
</comment>
<feature type="chain" id="PRO_0000070920" description="Chaperone protein DnaJ 1">
    <location>
        <begin position="1"/>
        <end position="350"/>
    </location>
</feature>
<feature type="domain" description="J" evidence="1">
    <location>
        <begin position="3"/>
        <end position="68"/>
    </location>
</feature>
<feature type="repeat" description="CXXCXGXG motif">
    <location>
        <begin position="129"/>
        <end position="136"/>
    </location>
</feature>
<feature type="repeat" description="CXXCXGXG motif">
    <location>
        <begin position="142"/>
        <end position="149"/>
    </location>
</feature>
<feature type="repeat" description="CXXCXGXG motif">
    <location>
        <begin position="168"/>
        <end position="175"/>
    </location>
</feature>
<feature type="repeat" description="CXXCXGXG motif">
    <location>
        <begin position="182"/>
        <end position="189"/>
    </location>
</feature>
<feature type="zinc finger region" description="CR-type" evidence="1">
    <location>
        <begin position="116"/>
        <end position="194"/>
    </location>
</feature>
<feature type="binding site" evidence="1">
    <location>
        <position position="129"/>
    </location>
    <ligand>
        <name>Zn(2+)</name>
        <dbReference type="ChEBI" id="CHEBI:29105"/>
        <label>1</label>
    </ligand>
</feature>
<feature type="binding site" evidence="1">
    <location>
        <position position="132"/>
    </location>
    <ligand>
        <name>Zn(2+)</name>
        <dbReference type="ChEBI" id="CHEBI:29105"/>
        <label>1</label>
    </ligand>
</feature>
<feature type="binding site" evidence="1">
    <location>
        <position position="142"/>
    </location>
    <ligand>
        <name>Zn(2+)</name>
        <dbReference type="ChEBI" id="CHEBI:29105"/>
        <label>2</label>
    </ligand>
</feature>
<feature type="binding site" evidence="1">
    <location>
        <position position="145"/>
    </location>
    <ligand>
        <name>Zn(2+)</name>
        <dbReference type="ChEBI" id="CHEBI:29105"/>
        <label>2</label>
    </ligand>
</feature>
<feature type="binding site" evidence="1">
    <location>
        <position position="168"/>
    </location>
    <ligand>
        <name>Zn(2+)</name>
        <dbReference type="ChEBI" id="CHEBI:29105"/>
        <label>2</label>
    </ligand>
</feature>
<feature type="binding site" evidence="1">
    <location>
        <position position="171"/>
    </location>
    <ligand>
        <name>Zn(2+)</name>
        <dbReference type="ChEBI" id="CHEBI:29105"/>
        <label>2</label>
    </ligand>
</feature>
<feature type="binding site" evidence="1">
    <location>
        <position position="182"/>
    </location>
    <ligand>
        <name>Zn(2+)</name>
        <dbReference type="ChEBI" id="CHEBI:29105"/>
        <label>1</label>
    </ligand>
</feature>
<feature type="binding site" evidence="1">
    <location>
        <position position="185"/>
    </location>
    <ligand>
        <name>Zn(2+)</name>
        <dbReference type="ChEBI" id="CHEBI:29105"/>
        <label>1</label>
    </ligand>
</feature>
<evidence type="ECO:0000255" key="1">
    <source>
        <dbReference type="HAMAP-Rule" id="MF_01152"/>
    </source>
</evidence>
<name>DNAJ1_THET8</name>
<sequence>MKDYYAILGVSREASQEEIKKAYRRLALKYHPDRNPGDKEAEERFKEINEAYAVLSDPKKRAAYDRGHLEAPEYRPEDLFDLFFQEVFGVRGHRRPPRGEDLEAEVEVELQDLLHGAEKEVRYTRLVPCEACGGEGGRRTPCPTCRGQGVVESYRQSFFGTVVTRTACPHCKGRGYLLAETCPACRGRGRVPREERVRVQVPPGMDEGHLLRVPGYGNLGPGGPGDLYLRIRVRPHPHLERQGPDLVYRLRLGLAQAALGARVEVPGLEGPIPLDIPPGTGHGEVFALEGGGLPLPGGRGRGTLRVVVELAVPKKLSPKAQKLLRAYAEEVGEEVAPEGFWERLKGFFRK</sequence>
<keyword id="KW-0143">Chaperone</keyword>
<keyword id="KW-0963">Cytoplasm</keyword>
<keyword id="KW-0235">DNA replication</keyword>
<keyword id="KW-0479">Metal-binding</keyword>
<keyword id="KW-1185">Reference proteome</keyword>
<keyword id="KW-0677">Repeat</keyword>
<keyword id="KW-0346">Stress response</keyword>
<keyword id="KW-0862">Zinc</keyword>
<keyword id="KW-0863">Zinc-finger</keyword>